<sequence length="100" mass="10879">MIPLQHGLILAAILFVLGLTGLIIRRNLLFMLISLEVMINAAALAFVVAGSYWGQADGQVMYILAITLAAAEASIGLALLLQLYRRRHTLNIDTVSEMRG</sequence>
<accession>A1JLI8</accession>
<proteinExistence type="inferred from homology"/>
<comment type="function">
    <text evidence="1">NDH-1 shuttles electrons from NADH, via FMN and iron-sulfur (Fe-S) centers, to quinones in the respiratory chain. The immediate electron acceptor for the enzyme in this species is believed to be ubiquinone. Couples the redox reaction to proton translocation (for every two electrons transferred, four hydrogen ions are translocated across the cytoplasmic membrane), and thus conserves the redox energy in a proton gradient.</text>
</comment>
<comment type="catalytic activity">
    <reaction evidence="1">
        <text>a quinone + NADH + 5 H(+)(in) = a quinol + NAD(+) + 4 H(+)(out)</text>
        <dbReference type="Rhea" id="RHEA:57888"/>
        <dbReference type="ChEBI" id="CHEBI:15378"/>
        <dbReference type="ChEBI" id="CHEBI:24646"/>
        <dbReference type="ChEBI" id="CHEBI:57540"/>
        <dbReference type="ChEBI" id="CHEBI:57945"/>
        <dbReference type="ChEBI" id="CHEBI:132124"/>
    </reaction>
</comment>
<comment type="subunit">
    <text evidence="1">NDH-1 is composed of 13 different subunits. Subunits NuoA, H, J, K, L, M, N constitute the membrane sector of the complex.</text>
</comment>
<comment type="subcellular location">
    <subcellularLocation>
        <location evidence="1">Cell inner membrane</location>
        <topology evidence="1">Multi-pass membrane protein</topology>
    </subcellularLocation>
</comment>
<comment type="similarity">
    <text evidence="1">Belongs to the complex I subunit 4L family.</text>
</comment>
<dbReference type="EC" id="7.1.1.-" evidence="1"/>
<dbReference type="EMBL" id="AM286415">
    <property type="protein sequence ID" value="CAL11444.1"/>
    <property type="molecule type" value="Genomic_DNA"/>
</dbReference>
<dbReference type="RefSeq" id="WP_005159229.1">
    <property type="nucleotide sequence ID" value="NC_008800.1"/>
</dbReference>
<dbReference type="RefSeq" id="YP_001005669.1">
    <property type="nucleotide sequence ID" value="NC_008800.1"/>
</dbReference>
<dbReference type="SMR" id="A1JLI8"/>
<dbReference type="GeneID" id="93969524"/>
<dbReference type="KEGG" id="yen:YE1353"/>
<dbReference type="PATRIC" id="fig|393305.7.peg.1472"/>
<dbReference type="eggNOG" id="COG0713">
    <property type="taxonomic scope" value="Bacteria"/>
</dbReference>
<dbReference type="HOGENOM" id="CLU_144724_0_1_6"/>
<dbReference type="OrthoDB" id="9801357at2"/>
<dbReference type="Proteomes" id="UP000000642">
    <property type="component" value="Chromosome"/>
</dbReference>
<dbReference type="GO" id="GO:0030964">
    <property type="term" value="C:NADH dehydrogenase complex"/>
    <property type="evidence" value="ECO:0007669"/>
    <property type="project" value="TreeGrafter"/>
</dbReference>
<dbReference type="GO" id="GO:0005886">
    <property type="term" value="C:plasma membrane"/>
    <property type="evidence" value="ECO:0007669"/>
    <property type="project" value="UniProtKB-SubCell"/>
</dbReference>
<dbReference type="GO" id="GO:0050136">
    <property type="term" value="F:NADH:ubiquinone reductase (non-electrogenic) activity"/>
    <property type="evidence" value="ECO:0007669"/>
    <property type="project" value="UniProtKB-UniRule"/>
</dbReference>
<dbReference type="GO" id="GO:0048038">
    <property type="term" value="F:quinone binding"/>
    <property type="evidence" value="ECO:0007669"/>
    <property type="project" value="UniProtKB-KW"/>
</dbReference>
<dbReference type="GO" id="GO:0042773">
    <property type="term" value="P:ATP synthesis coupled electron transport"/>
    <property type="evidence" value="ECO:0007669"/>
    <property type="project" value="InterPro"/>
</dbReference>
<dbReference type="FunFam" id="1.10.287.3510:FF:000001">
    <property type="entry name" value="NADH-quinone oxidoreductase subunit K"/>
    <property type="match status" value="1"/>
</dbReference>
<dbReference type="Gene3D" id="1.10.287.3510">
    <property type="match status" value="1"/>
</dbReference>
<dbReference type="HAMAP" id="MF_01456">
    <property type="entry name" value="NDH1_NuoK"/>
    <property type="match status" value="1"/>
</dbReference>
<dbReference type="InterPro" id="IPR001133">
    <property type="entry name" value="NADH_UbQ_OxRdtase_chain4L/K"/>
</dbReference>
<dbReference type="InterPro" id="IPR039428">
    <property type="entry name" value="NUOK/Mnh_C1-like"/>
</dbReference>
<dbReference type="NCBIfam" id="NF004319">
    <property type="entry name" value="PRK05715.1-1"/>
    <property type="match status" value="1"/>
</dbReference>
<dbReference type="NCBIfam" id="NF004320">
    <property type="entry name" value="PRK05715.1-2"/>
    <property type="match status" value="1"/>
</dbReference>
<dbReference type="PANTHER" id="PTHR11434:SF16">
    <property type="entry name" value="NADH-UBIQUINONE OXIDOREDUCTASE CHAIN 4L"/>
    <property type="match status" value="1"/>
</dbReference>
<dbReference type="PANTHER" id="PTHR11434">
    <property type="entry name" value="NADH-UBIQUINONE OXIDOREDUCTASE SUBUNIT ND4L"/>
    <property type="match status" value="1"/>
</dbReference>
<dbReference type="Pfam" id="PF00420">
    <property type="entry name" value="Oxidored_q2"/>
    <property type="match status" value="1"/>
</dbReference>
<keyword id="KW-0997">Cell inner membrane</keyword>
<keyword id="KW-1003">Cell membrane</keyword>
<keyword id="KW-0472">Membrane</keyword>
<keyword id="KW-0520">NAD</keyword>
<keyword id="KW-0874">Quinone</keyword>
<keyword id="KW-1278">Translocase</keyword>
<keyword id="KW-0812">Transmembrane</keyword>
<keyword id="KW-1133">Transmembrane helix</keyword>
<keyword id="KW-0813">Transport</keyword>
<keyword id="KW-0830">Ubiquinone</keyword>
<name>NUOK_YERE8</name>
<feature type="chain" id="PRO_0000390282" description="NADH-quinone oxidoreductase subunit K">
    <location>
        <begin position="1"/>
        <end position="100"/>
    </location>
</feature>
<feature type="transmembrane region" description="Helical" evidence="1">
    <location>
        <begin position="4"/>
        <end position="24"/>
    </location>
</feature>
<feature type="transmembrane region" description="Helical" evidence="1">
    <location>
        <begin position="28"/>
        <end position="48"/>
    </location>
</feature>
<feature type="transmembrane region" description="Helical" evidence="1">
    <location>
        <begin position="60"/>
        <end position="80"/>
    </location>
</feature>
<protein>
    <recommendedName>
        <fullName evidence="1">NADH-quinone oxidoreductase subunit K</fullName>
        <ecNumber evidence="1">7.1.1.-</ecNumber>
    </recommendedName>
    <alternativeName>
        <fullName evidence="1">NADH dehydrogenase I subunit K</fullName>
    </alternativeName>
    <alternativeName>
        <fullName evidence="1">NDH-1 subunit K</fullName>
    </alternativeName>
</protein>
<organism>
    <name type="scientific">Yersinia enterocolitica serotype O:8 / biotype 1B (strain NCTC 13174 / 8081)</name>
    <dbReference type="NCBI Taxonomy" id="393305"/>
    <lineage>
        <taxon>Bacteria</taxon>
        <taxon>Pseudomonadati</taxon>
        <taxon>Pseudomonadota</taxon>
        <taxon>Gammaproteobacteria</taxon>
        <taxon>Enterobacterales</taxon>
        <taxon>Yersiniaceae</taxon>
        <taxon>Yersinia</taxon>
    </lineage>
</organism>
<reference key="1">
    <citation type="journal article" date="2006" name="PLoS Genet.">
        <title>The complete genome sequence and comparative genome analysis of the high pathogenicity Yersinia enterocolitica strain 8081.</title>
        <authorList>
            <person name="Thomson N.R."/>
            <person name="Howard S."/>
            <person name="Wren B.W."/>
            <person name="Holden M.T.G."/>
            <person name="Crossman L."/>
            <person name="Challis G.L."/>
            <person name="Churcher C."/>
            <person name="Mungall K."/>
            <person name="Brooks K."/>
            <person name="Chillingworth T."/>
            <person name="Feltwell T."/>
            <person name="Abdellah Z."/>
            <person name="Hauser H."/>
            <person name="Jagels K."/>
            <person name="Maddison M."/>
            <person name="Moule S."/>
            <person name="Sanders M."/>
            <person name="Whitehead S."/>
            <person name="Quail M.A."/>
            <person name="Dougan G."/>
            <person name="Parkhill J."/>
            <person name="Prentice M.B."/>
        </authorList>
    </citation>
    <scope>NUCLEOTIDE SEQUENCE [LARGE SCALE GENOMIC DNA]</scope>
    <source>
        <strain>NCTC 13174 / 8081</strain>
    </source>
</reference>
<gene>
    <name evidence="1" type="primary">nuoK</name>
    <name type="ordered locus">YE1353</name>
</gene>
<evidence type="ECO:0000255" key="1">
    <source>
        <dbReference type="HAMAP-Rule" id="MF_01456"/>
    </source>
</evidence>